<sequence length="1280" mass="144701">MTKKIKLSNSESNKVNNNNNNNHGNGHNHNHSHNHGEMCHGHGIIGIVDSVTGENIIQVNGENLRSVPNGHSLIHNINSIINSHSKHGKIKNILKDSTIISSSINLSDKPINKITEENSPPSSPTLSSSTNTTTDRQELPQQQQQPQQQQSQPSTPPPQQQTNQKQQPEFNRYQANDILFRNKLTRSLSRNIPPLSLLKQNFKDEMENSFHTAISNIKDLNEKVEMVNLIFQHNLSENNAMVNVDSIIHSSTSGLLSEYKQITETFDWEQTSKGYKNKGNELFQKKQYSDALLLYNESLRIYDMELAAAATSTNLNEKENGGGGNVGGSATATATTINTPDVSILSSIHSNRCLCLVNLERYKEGAIEATRGIDLVGSSSVLHKLYYRRGICYYHLRKHYKAKKDFLRAHTLIEKRDSSDLASIENYLFKIQKLSLPLQKDEEIEQELDNKNNNSNDDEKQQQQQQQQDIDVTISSILEKSESLIDSRVEFLYQSDLVGRISEASDFIPSNTVLYQEEPYVSCLDRNYHSQYCYNCFKEILSPIYCKECSNSQYCSNKCLNEDYVKQHGRECGKGFLIICSHESLLVIRLLARKGRDYREANKGKKEEEPQQQQQKQQKSRKLPNLTFIPKPNPTQIDQNLNKPKIVLPEPTTAAINTALSSASTPTTATATTTTTTTTATTPTTLAETLSSTSLTENKSDSTPPPTPLPPSSSSSSSSSSSTTTTTFSFNMSELQNLQISQDDELFDVPTDPALFGKSNTYSQSYELINSFNPHFEHHSNDSMANMIFDAFVIERFLLYYQKDLGILSEDIDVHVILRHLCQLTTYTFAIPGYIDNHDSLVLKTLQLQQQQQQQQQQQQNQQSNQQPNQQSNQQSNQQSNQQSQPNQSPIIQSQNPPHASPFSPLRYSVQKYSQDKIGYAVYPMASLMNHSCDNNTHLQYDGCSLTIKSLFNIEKGEEILGCYGPHAFLNPLKDRLINLYNEFFFVCRCKACSEKSGPDPIKCPGSYHDHLNSPESSPVECSGTLLESINMNQLVTMAKLQQQQQQQQQHQQQNDKKKFNSNPTNLGSNNNNNYLNNNFNNPLRNGNPFLLKQTYDRYDDHEHRYFCCSKCGIELNGFDSFSLTSQIIISDNLFEMGFKAMTLYGNLSKDIETMLLRALELRKSIFKPCSKKIGDIYDSLSRFSISREDGASAAKYLELLIENVISRLGHSNSADLGREYSKLGQIYLTLGEIEKSEDAIEKAESILMSWKSNDPTDEEVLFLLTNRRKLFTAAHLINK</sequence>
<name>Y4059_DICDI</name>
<accession>Q54Q80</accession>
<comment type="function">
    <text evidence="1">Probable methyltransferase.</text>
</comment>
<comment type="similarity">
    <text evidence="4">Belongs to the class V-like SAM-binding methyltransferase superfamily.</text>
</comment>
<reference key="1">
    <citation type="journal article" date="2005" name="Nature">
        <title>The genome of the social amoeba Dictyostelium discoideum.</title>
        <authorList>
            <person name="Eichinger L."/>
            <person name="Pachebat J.A."/>
            <person name="Gloeckner G."/>
            <person name="Rajandream M.A."/>
            <person name="Sucgang R."/>
            <person name="Berriman M."/>
            <person name="Song J."/>
            <person name="Olsen R."/>
            <person name="Szafranski K."/>
            <person name="Xu Q."/>
            <person name="Tunggal B."/>
            <person name="Kummerfeld S."/>
            <person name="Madera M."/>
            <person name="Konfortov B.A."/>
            <person name="Rivero F."/>
            <person name="Bankier A.T."/>
            <person name="Lehmann R."/>
            <person name="Hamlin N."/>
            <person name="Davies R."/>
            <person name="Gaudet P."/>
            <person name="Fey P."/>
            <person name="Pilcher K."/>
            <person name="Chen G."/>
            <person name="Saunders D."/>
            <person name="Sodergren E.J."/>
            <person name="Davis P."/>
            <person name="Kerhornou A."/>
            <person name="Nie X."/>
            <person name="Hall N."/>
            <person name="Anjard C."/>
            <person name="Hemphill L."/>
            <person name="Bason N."/>
            <person name="Farbrother P."/>
            <person name="Desany B."/>
            <person name="Just E."/>
            <person name="Morio T."/>
            <person name="Rost R."/>
            <person name="Churcher C.M."/>
            <person name="Cooper J."/>
            <person name="Haydock S."/>
            <person name="van Driessche N."/>
            <person name="Cronin A."/>
            <person name="Goodhead I."/>
            <person name="Muzny D.M."/>
            <person name="Mourier T."/>
            <person name="Pain A."/>
            <person name="Lu M."/>
            <person name="Harper D."/>
            <person name="Lindsay R."/>
            <person name="Hauser H."/>
            <person name="James K.D."/>
            <person name="Quiles M."/>
            <person name="Madan Babu M."/>
            <person name="Saito T."/>
            <person name="Buchrieser C."/>
            <person name="Wardroper A."/>
            <person name="Felder M."/>
            <person name="Thangavelu M."/>
            <person name="Johnson D."/>
            <person name="Knights A."/>
            <person name="Loulseged H."/>
            <person name="Mungall K.L."/>
            <person name="Oliver K."/>
            <person name="Price C."/>
            <person name="Quail M.A."/>
            <person name="Urushihara H."/>
            <person name="Hernandez J."/>
            <person name="Rabbinowitsch E."/>
            <person name="Steffen D."/>
            <person name="Sanders M."/>
            <person name="Ma J."/>
            <person name="Kohara Y."/>
            <person name="Sharp S."/>
            <person name="Simmonds M.N."/>
            <person name="Spiegler S."/>
            <person name="Tivey A."/>
            <person name="Sugano S."/>
            <person name="White B."/>
            <person name="Walker D."/>
            <person name="Woodward J.R."/>
            <person name="Winckler T."/>
            <person name="Tanaka Y."/>
            <person name="Shaulsky G."/>
            <person name="Schleicher M."/>
            <person name="Weinstock G.M."/>
            <person name="Rosenthal A."/>
            <person name="Cox E.C."/>
            <person name="Chisholm R.L."/>
            <person name="Gibbs R.A."/>
            <person name="Loomis W.F."/>
            <person name="Platzer M."/>
            <person name="Kay R.R."/>
            <person name="Williams J.G."/>
            <person name="Dear P.H."/>
            <person name="Noegel A.A."/>
            <person name="Barrell B.G."/>
            <person name="Kuspa A."/>
        </authorList>
    </citation>
    <scope>NUCLEOTIDE SEQUENCE [LARGE SCALE GENOMIC DNA]</scope>
    <source>
        <strain>AX4</strain>
    </source>
</reference>
<evidence type="ECO:0000250" key="1"/>
<evidence type="ECO:0000255" key="2"/>
<evidence type="ECO:0000255" key="3">
    <source>
        <dbReference type="PROSITE-ProRule" id="PRU00134"/>
    </source>
</evidence>
<evidence type="ECO:0000255" key="4">
    <source>
        <dbReference type="PROSITE-ProRule" id="PRU00190"/>
    </source>
</evidence>
<evidence type="ECO:0000256" key="5">
    <source>
        <dbReference type="SAM" id="MobiDB-lite"/>
    </source>
</evidence>
<dbReference type="EC" id="2.1.1.-"/>
<dbReference type="EMBL" id="AAFI02000063">
    <property type="protein sequence ID" value="EAL65370.1"/>
    <property type="molecule type" value="Genomic_DNA"/>
</dbReference>
<dbReference type="RefSeq" id="XP_638717.1">
    <property type="nucleotide sequence ID" value="XM_633625.1"/>
</dbReference>
<dbReference type="SMR" id="Q54Q80"/>
<dbReference type="FunCoup" id="Q54Q80">
    <property type="interactions" value="137"/>
</dbReference>
<dbReference type="GlyGen" id="Q54Q80">
    <property type="glycosylation" value="1 site"/>
</dbReference>
<dbReference type="PaxDb" id="44689-DDB0238659"/>
<dbReference type="EnsemblProtists" id="EAL65370">
    <property type="protein sequence ID" value="EAL65370"/>
    <property type="gene ID" value="DDB_G0284059"/>
</dbReference>
<dbReference type="GeneID" id="8624387"/>
<dbReference type="KEGG" id="ddi:DDB_G0284059"/>
<dbReference type="dictyBase" id="DDB_G0284059"/>
<dbReference type="VEuPathDB" id="AmoebaDB:DDB_G0284059"/>
<dbReference type="eggNOG" id="KOG2084">
    <property type="taxonomic scope" value="Eukaryota"/>
</dbReference>
<dbReference type="HOGENOM" id="CLU_263198_0_0_1"/>
<dbReference type="InParanoid" id="Q54Q80"/>
<dbReference type="OMA" id="EYFFICR"/>
<dbReference type="PRO" id="PR:Q54Q80"/>
<dbReference type="Proteomes" id="UP000002195">
    <property type="component" value="Chromosome 4"/>
</dbReference>
<dbReference type="GO" id="GO:0005737">
    <property type="term" value="C:cytoplasm"/>
    <property type="evidence" value="ECO:0000318"/>
    <property type="project" value="GO_Central"/>
</dbReference>
<dbReference type="GO" id="GO:0005634">
    <property type="term" value="C:nucleus"/>
    <property type="evidence" value="ECO:0000318"/>
    <property type="project" value="GO_Central"/>
</dbReference>
<dbReference type="GO" id="GO:0042826">
    <property type="term" value="F:histone deacetylase binding"/>
    <property type="evidence" value="ECO:0000318"/>
    <property type="project" value="GO_Central"/>
</dbReference>
<dbReference type="GO" id="GO:0008168">
    <property type="term" value="F:methyltransferase activity"/>
    <property type="evidence" value="ECO:0007669"/>
    <property type="project" value="UniProtKB-KW"/>
</dbReference>
<dbReference type="GO" id="GO:0008270">
    <property type="term" value="F:zinc ion binding"/>
    <property type="evidence" value="ECO:0007669"/>
    <property type="project" value="UniProtKB-KW"/>
</dbReference>
<dbReference type="GO" id="GO:0032259">
    <property type="term" value="P:methylation"/>
    <property type="evidence" value="ECO:0007669"/>
    <property type="project" value="UniProtKB-KW"/>
</dbReference>
<dbReference type="Gene3D" id="1.10.220.160">
    <property type="match status" value="1"/>
</dbReference>
<dbReference type="Gene3D" id="6.10.140.2220">
    <property type="match status" value="1"/>
</dbReference>
<dbReference type="Gene3D" id="2.170.270.10">
    <property type="entry name" value="SET domain"/>
    <property type="match status" value="2"/>
</dbReference>
<dbReference type="Gene3D" id="1.25.40.10">
    <property type="entry name" value="Tetratricopeptide repeat domain"/>
    <property type="match status" value="2"/>
</dbReference>
<dbReference type="InterPro" id="IPR052097">
    <property type="entry name" value="SET-MYND_domain_protein"/>
</dbReference>
<dbReference type="InterPro" id="IPR001214">
    <property type="entry name" value="SET_dom"/>
</dbReference>
<dbReference type="InterPro" id="IPR046341">
    <property type="entry name" value="SET_dom_sf"/>
</dbReference>
<dbReference type="InterPro" id="IPR011990">
    <property type="entry name" value="TPR-like_helical_dom_sf"/>
</dbReference>
<dbReference type="InterPro" id="IPR019734">
    <property type="entry name" value="TPR_rpt"/>
</dbReference>
<dbReference type="InterPro" id="IPR002893">
    <property type="entry name" value="Znf_MYND"/>
</dbReference>
<dbReference type="PANTHER" id="PTHR46165">
    <property type="entry name" value="SET AND MYND DOMAIN-CONTAINING PROTEIN 4"/>
    <property type="match status" value="1"/>
</dbReference>
<dbReference type="PANTHER" id="PTHR46165:SF2">
    <property type="entry name" value="SET AND MYND DOMAIN-CONTAINING PROTEIN 4"/>
    <property type="match status" value="1"/>
</dbReference>
<dbReference type="Pfam" id="PF00856">
    <property type="entry name" value="SET"/>
    <property type="match status" value="1"/>
</dbReference>
<dbReference type="Pfam" id="PF01753">
    <property type="entry name" value="zf-MYND"/>
    <property type="match status" value="1"/>
</dbReference>
<dbReference type="SMART" id="SM00028">
    <property type="entry name" value="TPR"/>
    <property type="match status" value="3"/>
</dbReference>
<dbReference type="SUPFAM" id="SSF144232">
    <property type="entry name" value="HIT/MYND zinc finger-like"/>
    <property type="match status" value="1"/>
</dbReference>
<dbReference type="SUPFAM" id="SSF82199">
    <property type="entry name" value="SET domain"/>
    <property type="match status" value="1"/>
</dbReference>
<dbReference type="SUPFAM" id="SSF48452">
    <property type="entry name" value="TPR-like"/>
    <property type="match status" value="1"/>
</dbReference>
<dbReference type="PROSITE" id="PS50280">
    <property type="entry name" value="SET"/>
    <property type="match status" value="1"/>
</dbReference>
<dbReference type="PROSITE" id="PS01360">
    <property type="entry name" value="ZF_MYND_1"/>
    <property type="match status" value="1"/>
</dbReference>
<dbReference type="PROSITE" id="PS50865">
    <property type="entry name" value="ZF_MYND_2"/>
    <property type="match status" value="1"/>
</dbReference>
<proteinExistence type="inferred from homology"/>
<organism>
    <name type="scientific">Dictyostelium discoideum</name>
    <name type="common">Social amoeba</name>
    <dbReference type="NCBI Taxonomy" id="44689"/>
    <lineage>
        <taxon>Eukaryota</taxon>
        <taxon>Amoebozoa</taxon>
        <taxon>Evosea</taxon>
        <taxon>Eumycetozoa</taxon>
        <taxon>Dictyostelia</taxon>
        <taxon>Dictyosteliales</taxon>
        <taxon>Dictyosteliaceae</taxon>
        <taxon>Dictyostelium</taxon>
    </lineage>
</organism>
<gene>
    <name type="ORF">DDB_G0284059</name>
</gene>
<keyword id="KW-0175">Coiled coil</keyword>
<keyword id="KW-0479">Metal-binding</keyword>
<keyword id="KW-0489">Methyltransferase</keyword>
<keyword id="KW-1185">Reference proteome</keyword>
<keyword id="KW-0677">Repeat</keyword>
<keyword id="KW-0949">S-adenosyl-L-methionine</keyword>
<keyword id="KW-0802">TPR repeat</keyword>
<keyword id="KW-0808">Transferase</keyword>
<keyword id="KW-0862">Zinc</keyword>
<keyword id="KW-0863">Zinc-finger</keyword>
<feature type="chain" id="PRO_0000389436" description="SET and MYND domain-containing protein DDB_G0284059">
    <location>
        <begin position="1"/>
        <end position="1280"/>
    </location>
</feature>
<feature type="repeat" description="TPR 1">
    <location>
        <begin position="272"/>
        <end position="305"/>
    </location>
</feature>
<feature type="repeat" description="TPR 2">
    <location>
        <begin position="383"/>
        <end position="416"/>
    </location>
</feature>
<feature type="domain" description="SET" evidence="4">
    <location>
        <begin position="822"/>
        <end position="965"/>
    </location>
</feature>
<feature type="repeat" description="TPR 3">
    <location>
        <begin position="1218"/>
        <end position="1251"/>
    </location>
</feature>
<feature type="zinc finger region" description="MYND-type" evidence="3">
    <location>
        <begin position="533"/>
        <end position="572"/>
    </location>
</feature>
<feature type="region of interest" description="Disordered" evidence="5">
    <location>
        <begin position="1"/>
        <end position="35"/>
    </location>
</feature>
<feature type="region of interest" description="Disordered" evidence="5">
    <location>
        <begin position="111"/>
        <end position="167"/>
    </location>
</feature>
<feature type="region of interest" description="Disordered" evidence="5">
    <location>
        <begin position="601"/>
        <end position="642"/>
    </location>
</feature>
<feature type="region of interest" description="Disordered" evidence="5">
    <location>
        <begin position="659"/>
        <end position="726"/>
    </location>
</feature>
<feature type="region of interest" description="Disordered" evidence="5">
    <location>
        <begin position="854"/>
        <end position="905"/>
    </location>
</feature>
<feature type="region of interest" description="Disordered" evidence="5">
    <location>
        <begin position="1039"/>
        <end position="1079"/>
    </location>
</feature>
<feature type="coiled-coil region" evidence="2">
    <location>
        <begin position="439"/>
        <end position="468"/>
    </location>
</feature>
<feature type="compositionally biased region" description="Low complexity" evidence="5">
    <location>
        <begin position="16"/>
        <end position="25"/>
    </location>
</feature>
<feature type="compositionally biased region" description="Low complexity" evidence="5">
    <location>
        <begin position="117"/>
        <end position="153"/>
    </location>
</feature>
<feature type="compositionally biased region" description="Low complexity" evidence="5">
    <location>
        <begin position="659"/>
        <end position="697"/>
    </location>
</feature>
<feature type="compositionally biased region" description="Low complexity" evidence="5">
    <location>
        <begin position="712"/>
        <end position="726"/>
    </location>
</feature>
<feature type="compositionally biased region" description="Low complexity" evidence="5">
    <location>
        <begin position="854"/>
        <end position="898"/>
    </location>
</feature>
<feature type="compositionally biased region" description="Low complexity" evidence="5">
    <location>
        <begin position="1042"/>
        <end position="1053"/>
    </location>
</feature>
<feature type="compositionally biased region" description="Low complexity" evidence="5">
    <location>
        <begin position="1061"/>
        <end position="1079"/>
    </location>
</feature>
<feature type="binding site" evidence="3">
    <location>
        <position position="533"/>
    </location>
    <ligand>
        <name>Zn(2+)</name>
        <dbReference type="ChEBI" id="CHEBI:29105"/>
        <label>1</label>
    </ligand>
</feature>
<feature type="binding site" evidence="3">
    <location>
        <position position="536"/>
    </location>
    <ligand>
        <name>Zn(2+)</name>
        <dbReference type="ChEBI" id="CHEBI:29105"/>
        <label>1</label>
    </ligand>
</feature>
<feature type="binding site" evidence="3">
    <location>
        <position position="546"/>
    </location>
    <ligand>
        <name>Zn(2+)</name>
        <dbReference type="ChEBI" id="CHEBI:29105"/>
        <label>2</label>
    </ligand>
</feature>
<feature type="binding site" evidence="3">
    <location>
        <position position="549"/>
    </location>
    <ligand>
        <name>Zn(2+)</name>
        <dbReference type="ChEBI" id="CHEBI:29105"/>
        <label>2</label>
    </ligand>
</feature>
<feature type="binding site" evidence="3">
    <location>
        <position position="555"/>
    </location>
    <ligand>
        <name>Zn(2+)</name>
        <dbReference type="ChEBI" id="CHEBI:29105"/>
        <label>1</label>
    </ligand>
</feature>
<feature type="binding site" evidence="3">
    <location>
        <position position="559"/>
    </location>
    <ligand>
        <name>Zn(2+)</name>
        <dbReference type="ChEBI" id="CHEBI:29105"/>
        <label>1</label>
    </ligand>
</feature>
<feature type="binding site" evidence="3">
    <location>
        <position position="568"/>
    </location>
    <ligand>
        <name>Zn(2+)</name>
        <dbReference type="ChEBI" id="CHEBI:29105"/>
        <label>2</label>
    </ligand>
</feature>
<feature type="binding site" evidence="3">
    <location>
        <position position="572"/>
    </location>
    <ligand>
        <name>Zn(2+)</name>
        <dbReference type="ChEBI" id="CHEBI:29105"/>
        <label>2</label>
    </ligand>
</feature>
<protein>
    <recommendedName>
        <fullName>SET and MYND domain-containing protein DDB_G0284059</fullName>
        <ecNumber>2.1.1.-</ecNumber>
    </recommendedName>
</protein>